<organism>
    <name type="scientific">Prosthecochloris aestuarii (strain DSM 271 / SK 413)</name>
    <dbReference type="NCBI Taxonomy" id="290512"/>
    <lineage>
        <taxon>Bacteria</taxon>
        <taxon>Pseudomonadati</taxon>
        <taxon>Chlorobiota</taxon>
        <taxon>Chlorobiia</taxon>
        <taxon>Chlorobiales</taxon>
        <taxon>Chlorobiaceae</taxon>
        <taxon>Prosthecochloris</taxon>
    </lineage>
</organism>
<protein>
    <recommendedName>
        <fullName evidence="1">DNA repair protein RecO</fullName>
    </recommendedName>
    <alternativeName>
        <fullName evidence="1">Recombination protein O</fullName>
    </alternativeName>
</protein>
<reference key="1">
    <citation type="submission" date="2008-06" db="EMBL/GenBank/DDBJ databases">
        <title>Complete sequence of chromosome of Prosthecochloris aestuarii DSM 271.</title>
        <authorList>
            <consortium name="US DOE Joint Genome Institute"/>
            <person name="Lucas S."/>
            <person name="Copeland A."/>
            <person name="Lapidus A."/>
            <person name="Glavina del Rio T."/>
            <person name="Dalin E."/>
            <person name="Tice H."/>
            <person name="Bruce D."/>
            <person name="Goodwin L."/>
            <person name="Pitluck S."/>
            <person name="Schmutz J."/>
            <person name="Larimer F."/>
            <person name="Land M."/>
            <person name="Hauser L."/>
            <person name="Kyrpides N."/>
            <person name="Anderson I."/>
            <person name="Liu Z."/>
            <person name="Li T."/>
            <person name="Zhao F."/>
            <person name="Overmann J."/>
            <person name="Bryant D.A."/>
            <person name="Richardson P."/>
        </authorList>
    </citation>
    <scope>NUCLEOTIDE SEQUENCE [LARGE SCALE GENOMIC DNA]</scope>
    <source>
        <strain>DSM 271 / SK 413</strain>
    </source>
</reference>
<proteinExistence type="inferred from homology"/>
<accession>B4S3Q7</accession>
<feature type="chain" id="PRO_1000099397" description="DNA repair protein RecO">
    <location>
        <begin position="1"/>
        <end position="264"/>
    </location>
</feature>
<evidence type="ECO:0000255" key="1">
    <source>
        <dbReference type="HAMAP-Rule" id="MF_00201"/>
    </source>
</evidence>
<comment type="function">
    <text evidence="1">Involved in DNA repair and RecF pathway recombination.</text>
</comment>
<comment type="similarity">
    <text evidence="1">Belongs to the RecO family.</text>
</comment>
<keyword id="KW-0227">DNA damage</keyword>
<keyword id="KW-0233">DNA recombination</keyword>
<keyword id="KW-0234">DNA repair</keyword>
<dbReference type="EMBL" id="CP001108">
    <property type="protein sequence ID" value="ACF45253.1"/>
    <property type="molecule type" value="Genomic_DNA"/>
</dbReference>
<dbReference type="RefSeq" id="WP_012504790.1">
    <property type="nucleotide sequence ID" value="NC_011059.1"/>
</dbReference>
<dbReference type="SMR" id="B4S3Q7"/>
<dbReference type="STRING" id="290512.Paes_0194"/>
<dbReference type="KEGG" id="paa:Paes_0194"/>
<dbReference type="eggNOG" id="COG1381">
    <property type="taxonomic scope" value="Bacteria"/>
</dbReference>
<dbReference type="HOGENOM" id="CLU_066632_1_0_10"/>
<dbReference type="Proteomes" id="UP000002725">
    <property type="component" value="Chromosome"/>
</dbReference>
<dbReference type="GO" id="GO:0043590">
    <property type="term" value="C:bacterial nucleoid"/>
    <property type="evidence" value="ECO:0007669"/>
    <property type="project" value="TreeGrafter"/>
</dbReference>
<dbReference type="GO" id="GO:0006310">
    <property type="term" value="P:DNA recombination"/>
    <property type="evidence" value="ECO:0007669"/>
    <property type="project" value="UniProtKB-UniRule"/>
</dbReference>
<dbReference type="GO" id="GO:0006302">
    <property type="term" value="P:double-strand break repair"/>
    <property type="evidence" value="ECO:0007669"/>
    <property type="project" value="TreeGrafter"/>
</dbReference>
<dbReference type="Gene3D" id="2.40.50.140">
    <property type="entry name" value="Nucleic acid-binding proteins"/>
    <property type="match status" value="1"/>
</dbReference>
<dbReference type="Gene3D" id="1.20.1440.120">
    <property type="entry name" value="Recombination protein O, C-terminal domain"/>
    <property type="match status" value="1"/>
</dbReference>
<dbReference type="HAMAP" id="MF_00201">
    <property type="entry name" value="RecO"/>
    <property type="match status" value="1"/>
</dbReference>
<dbReference type="InterPro" id="IPR037278">
    <property type="entry name" value="ARFGAP/RecO"/>
</dbReference>
<dbReference type="InterPro" id="IPR022572">
    <property type="entry name" value="DNA_rep/recomb_RecO_N"/>
</dbReference>
<dbReference type="InterPro" id="IPR012340">
    <property type="entry name" value="NA-bd_OB-fold"/>
</dbReference>
<dbReference type="InterPro" id="IPR003717">
    <property type="entry name" value="RecO"/>
</dbReference>
<dbReference type="InterPro" id="IPR042242">
    <property type="entry name" value="RecO_C"/>
</dbReference>
<dbReference type="NCBIfam" id="TIGR00613">
    <property type="entry name" value="reco"/>
    <property type="match status" value="1"/>
</dbReference>
<dbReference type="PANTHER" id="PTHR33991">
    <property type="entry name" value="DNA REPAIR PROTEIN RECO"/>
    <property type="match status" value="1"/>
</dbReference>
<dbReference type="PANTHER" id="PTHR33991:SF1">
    <property type="entry name" value="DNA REPAIR PROTEIN RECO"/>
    <property type="match status" value="1"/>
</dbReference>
<dbReference type="Pfam" id="PF02565">
    <property type="entry name" value="RecO_C"/>
    <property type="match status" value="1"/>
</dbReference>
<dbReference type="Pfam" id="PF11967">
    <property type="entry name" value="RecO_N"/>
    <property type="match status" value="1"/>
</dbReference>
<dbReference type="SUPFAM" id="SSF57863">
    <property type="entry name" value="ArfGap/RecO-like zinc finger"/>
    <property type="match status" value="1"/>
</dbReference>
<dbReference type="SUPFAM" id="SSF50249">
    <property type="entry name" value="Nucleic acid-binding proteins"/>
    <property type="match status" value="1"/>
</dbReference>
<sequence>MLVKTRGVILKEIKFRDQSKICPVFTEHFGKISVILKGVRNPKNKLSGVFSTGNMVELVIYKKQNRDLHLVSDALLLQSPMSARPDMERFTTIYQLIETLKQVTGSEEPHPVLFRFLAATIEELCKPERDYQLVLAWFLIRLVTVLGFEPELEQCVISGEPLIPAAEAMAPDENLYFLFDPGGIAFAGPSALIRSEKRALPALSFRLLRWLSRQNIDALPDIRIPEEHPRRLCELLQDYCAVHIDHNPPVRNRRIISQIRPDNT</sequence>
<gene>
    <name evidence="1" type="primary">recO</name>
    <name type="ordered locus">Paes_0194</name>
</gene>
<name>RECO_PROA2</name>